<sequence length="379" mass="42571">MKILRKNHPLLKIMNHSFIDLPTPSNISSWWNFGSLLGTCLVIQILTGLFLAMHYTSDTTTAFSSVAHICRDVNYGWLIRYLHANGASMFFICLFIHVGRGIYYGSYVLSETWNIGIILFLTTMATAFVGYVLPWGQMSFWGATVITNLLSAIPYIGSTLVEWIWGGFSVDKATLTRFFAFHFILPFIIAAFTLVHLLFLHETGSNNPSGLNSNSDKIPFHPYYTTKDLLGIFLLLLALMILTLFFPDILGDPDNYTPANPLNTPAHIKPEWYFLFAYAILRSIPNKLGGVLALILSILILATFPLLNNSKQHGLIFRPITQTIYWIFIANLLVLTWIGGQPVELPFTTIGQIASITYFAIIIILIPISNAIENNIIKL</sequence>
<keyword id="KW-0249">Electron transport</keyword>
<keyword id="KW-0349">Heme</keyword>
<keyword id="KW-0408">Iron</keyword>
<keyword id="KW-0472">Membrane</keyword>
<keyword id="KW-0479">Metal-binding</keyword>
<keyword id="KW-0496">Mitochondrion</keyword>
<keyword id="KW-0999">Mitochondrion inner membrane</keyword>
<keyword id="KW-0679">Respiratory chain</keyword>
<keyword id="KW-0812">Transmembrane</keyword>
<keyword id="KW-1133">Transmembrane helix</keyword>
<keyword id="KW-0813">Transport</keyword>
<keyword id="KW-0830">Ubiquinone</keyword>
<accession>Q1KTB0</accession>
<comment type="function">
    <text evidence="2">Component of the ubiquinol-cytochrome c reductase complex (complex III or cytochrome b-c1 complex) that is part of the mitochondrial respiratory chain. The b-c1 complex mediates electron transfer from ubiquinol to cytochrome c. Contributes to the generation of a proton gradient across the mitochondrial membrane that is then used for ATP synthesis.</text>
</comment>
<comment type="cofactor">
    <cofactor evidence="2">
        <name>heme b</name>
        <dbReference type="ChEBI" id="CHEBI:60344"/>
    </cofactor>
    <text evidence="2">Binds 2 heme b groups non-covalently.</text>
</comment>
<comment type="subunit">
    <text evidence="2">The cytochrome bc1 complex contains 11 subunits: 3 respiratory subunits (MT-CYB, CYC1 and UQCRFS1), 2 core proteins (UQCRC1 and UQCRC2) and 6 low-molecular weight proteins (UQCRH/QCR6, UQCRB/QCR7, UQCRQ/QCR8, UQCR10/QCR9, UQCR11/QCR10 and a cleavage product of UQCRFS1). This cytochrome bc1 complex then forms a dimer.</text>
</comment>
<comment type="subcellular location">
    <subcellularLocation>
        <location evidence="2">Mitochondrion inner membrane</location>
        <topology evidence="2">Multi-pass membrane protein</topology>
    </subcellularLocation>
</comment>
<comment type="miscellaneous">
    <text evidence="1">Heme 1 (or BL or b562) is low-potential and absorbs at about 562 nm, and heme 2 (or BH or b566) is high-potential and absorbs at about 566 nm.</text>
</comment>
<comment type="similarity">
    <text evidence="3 4">Belongs to the cytochrome b family.</text>
</comment>
<comment type="caution">
    <text evidence="2">The full-length protein contains only eight transmembrane helices, not nine as predicted by bioinformatics tools.</text>
</comment>
<evidence type="ECO:0000250" key="1"/>
<evidence type="ECO:0000250" key="2">
    <source>
        <dbReference type="UniProtKB" id="P00157"/>
    </source>
</evidence>
<evidence type="ECO:0000255" key="3">
    <source>
        <dbReference type="PROSITE-ProRule" id="PRU00967"/>
    </source>
</evidence>
<evidence type="ECO:0000255" key="4">
    <source>
        <dbReference type="PROSITE-ProRule" id="PRU00968"/>
    </source>
</evidence>
<name>CYB_AKOAZ</name>
<reference key="1">
    <citation type="submission" date="2006-03" db="EMBL/GenBank/DDBJ databases">
        <authorList>
            <person name="D'Elia G."/>
        </authorList>
    </citation>
    <scope>NUCLEOTIDE SEQUENCE [GENOMIC DNA]</scope>
    <source>
        <strain>Isolate GD 264</strain>
    </source>
</reference>
<protein>
    <recommendedName>
        <fullName>Cytochrome b</fullName>
    </recommendedName>
    <alternativeName>
        <fullName>Complex III subunit 3</fullName>
    </alternativeName>
    <alternativeName>
        <fullName>Complex III subunit III</fullName>
    </alternativeName>
    <alternativeName>
        <fullName>Cytochrome b-c1 complex subunit 3</fullName>
    </alternativeName>
    <alternativeName>
        <fullName>Ubiquinol-cytochrome-c reductase complex cytochrome b subunit</fullName>
    </alternativeName>
</protein>
<gene>
    <name type="primary">MT-CYB</name>
    <name type="synonym">COB</name>
    <name type="synonym">CYTB</name>
    <name type="synonym">MTCYB</name>
</gene>
<feature type="chain" id="PRO_0000255560" description="Cytochrome b">
    <location>
        <begin position="1"/>
        <end position="379"/>
    </location>
</feature>
<feature type="transmembrane region" description="Helical" evidence="2">
    <location>
        <begin position="33"/>
        <end position="53"/>
    </location>
</feature>
<feature type="transmembrane region" description="Helical" evidence="2">
    <location>
        <begin position="77"/>
        <end position="98"/>
    </location>
</feature>
<feature type="transmembrane region" description="Helical" evidence="2">
    <location>
        <begin position="113"/>
        <end position="133"/>
    </location>
</feature>
<feature type="transmembrane region" description="Helical" evidence="2">
    <location>
        <begin position="178"/>
        <end position="198"/>
    </location>
</feature>
<feature type="transmembrane region" description="Helical" evidence="2">
    <location>
        <begin position="226"/>
        <end position="246"/>
    </location>
</feature>
<feature type="transmembrane region" description="Helical" evidence="2">
    <location>
        <begin position="288"/>
        <end position="308"/>
    </location>
</feature>
<feature type="transmembrane region" description="Helical" evidence="2">
    <location>
        <begin position="320"/>
        <end position="340"/>
    </location>
</feature>
<feature type="transmembrane region" description="Helical" evidence="2">
    <location>
        <begin position="347"/>
        <end position="367"/>
    </location>
</feature>
<feature type="binding site" description="axial binding residue" evidence="2">
    <location>
        <position position="83"/>
    </location>
    <ligand>
        <name>heme b</name>
        <dbReference type="ChEBI" id="CHEBI:60344"/>
        <label>b562</label>
    </ligand>
    <ligandPart>
        <name>Fe</name>
        <dbReference type="ChEBI" id="CHEBI:18248"/>
    </ligandPart>
</feature>
<feature type="binding site" description="axial binding residue" evidence="2">
    <location>
        <position position="97"/>
    </location>
    <ligand>
        <name>heme b</name>
        <dbReference type="ChEBI" id="CHEBI:60344"/>
        <label>b566</label>
    </ligand>
    <ligandPart>
        <name>Fe</name>
        <dbReference type="ChEBI" id="CHEBI:18248"/>
    </ligandPart>
</feature>
<feature type="binding site" description="axial binding residue" evidence="2">
    <location>
        <position position="182"/>
    </location>
    <ligand>
        <name>heme b</name>
        <dbReference type="ChEBI" id="CHEBI:60344"/>
        <label>b562</label>
    </ligand>
    <ligandPart>
        <name>Fe</name>
        <dbReference type="ChEBI" id="CHEBI:18248"/>
    </ligandPart>
</feature>
<feature type="binding site" description="axial binding residue" evidence="2">
    <location>
        <position position="196"/>
    </location>
    <ligand>
        <name>heme b</name>
        <dbReference type="ChEBI" id="CHEBI:60344"/>
        <label>b566</label>
    </ligand>
    <ligandPart>
        <name>Fe</name>
        <dbReference type="ChEBI" id="CHEBI:18248"/>
    </ligandPart>
</feature>
<feature type="binding site" evidence="2">
    <location>
        <position position="201"/>
    </location>
    <ligand>
        <name>a ubiquinone</name>
        <dbReference type="ChEBI" id="CHEBI:16389"/>
    </ligand>
</feature>
<proteinExistence type="inferred from homology"/>
<geneLocation type="mitochondrion"/>
<dbReference type="EMBL" id="DQ444328">
    <property type="protein sequence ID" value="ABE28527.1"/>
    <property type="molecule type" value="Genomic_DNA"/>
</dbReference>
<dbReference type="SMR" id="Q1KTB0"/>
<dbReference type="GO" id="GO:0005743">
    <property type="term" value="C:mitochondrial inner membrane"/>
    <property type="evidence" value="ECO:0007669"/>
    <property type="project" value="UniProtKB-SubCell"/>
</dbReference>
<dbReference type="GO" id="GO:0045275">
    <property type="term" value="C:respiratory chain complex III"/>
    <property type="evidence" value="ECO:0007669"/>
    <property type="project" value="InterPro"/>
</dbReference>
<dbReference type="GO" id="GO:0046872">
    <property type="term" value="F:metal ion binding"/>
    <property type="evidence" value="ECO:0007669"/>
    <property type="project" value="UniProtKB-KW"/>
</dbReference>
<dbReference type="GO" id="GO:0008121">
    <property type="term" value="F:ubiquinol-cytochrome-c reductase activity"/>
    <property type="evidence" value="ECO:0007669"/>
    <property type="project" value="InterPro"/>
</dbReference>
<dbReference type="GO" id="GO:0006122">
    <property type="term" value="P:mitochondrial electron transport, ubiquinol to cytochrome c"/>
    <property type="evidence" value="ECO:0007669"/>
    <property type="project" value="TreeGrafter"/>
</dbReference>
<dbReference type="CDD" id="cd00290">
    <property type="entry name" value="cytochrome_b_C"/>
    <property type="match status" value="1"/>
</dbReference>
<dbReference type="CDD" id="cd00284">
    <property type="entry name" value="Cytochrome_b_N"/>
    <property type="match status" value="1"/>
</dbReference>
<dbReference type="FunFam" id="1.20.810.10:FF:000002">
    <property type="entry name" value="Cytochrome b"/>
    <property type="match status" value="1"/>
</dbReference>
<dbReference type="Gene3D" id="1.20.810.10">
    <property type="entry name" value="Cytochrome Bc1 Complex, Chain C"/>
    <property type="match status" value="1"/>
</dbReference>
<dbReference type="InterPro" id="IPR005798">
    <property type="entry name" value="Cyt_b/b6_C"/>
</dbReference>
<dbReference type="InterPro" id="IPR036150">
    <property type="entry name" value="Cyt_b/b6_C_sf"/>
</dbReference>
<dbReference type="InterPro" id="IPR005797">
    <property type="entry name" value="Cyt_b/b6_N"/>
</dbReference>
<dbReference type="InterPro" id="IPR027387">
    <property type="entry name" value="Cytb/b6-like_sf"/>
</dbReference>
<dbReference type="InterPro" id="IPR030689">
    <property type="entry name" value="Cytochrome_b"/>
</dbReference>
<dbReference type="InterPro" id="IPR048260">
    <property type="entry name" value="Cytochrome_b_C_euk/bac"/>
</dbReference>
<dbReference type="InterPro" id="IPR048259">
    <property type="entry name" value="Cytochrome_b_N_euk/bac"/>
</dbReference>
<dbReference type="InterPro" id="IPR016174">
    <property type="entry name" value="Di-haem_cyt_TM"/>
</dbReference>
<dbReference type="PANTHER" id="PTHR19271">
    <property type="entry name" value="CYTOCHROME B"/>
    <property type="match status" value="1"/>
</dbReference>
<dbReference type="PANTHER" id="PTHR19271:SF16">
    <property type="entry name" value="CYTOCHROME B"/>
    <property type="match status" value="1"/>
</dbReference>
<dbReference type="Pfam" id="PF00032">
    <property type="entry name" value="Cytochrom_B_C"/>
    <property type="match status" value="1"/>
</dbReference>
<dbReference type="Pfam" id="PF00033">
    <property type="entry name" value="Cytochrome_B"/>
    <property type="match status" value="1"/>
</dbReference>
<dbReference type="PIRSF" id="PIRSF038885">
    <property type="entry name" value="COB"/>
    <property type="match status" value="1"/>
</dbReference>
<dbReference type="SUPFAM" id="SSF81648">
    <property type="entry name" value="a domain/subunit of cytochrome bc1 complex (Ubiquinol-cytochrome c reductase)"/>
    <property type="match status" value="1"/>
</dbReference>
<dbReference type="SUPFAM" id="SSF81342">
    <property type="entry name" value="Transmembrane di-heme cytochromes"/>
    <property type="match status" value="1"/>
</dbReference>
<dbReference type="PROSITE" id="PS51003">
    <property type="entry name" value="CYTB_CTER"/>
    <property type="match status" value="1"/>
</dbReference>
<dbReference type="PROSITE" id="PS51002">
    <property type="entry name" value="CYTB_NTER"/>
    <property type="match status" value="1"/>
</dbReference>
<organism>
    <name type="scientific">Akodon azarae</name>
    <name type="common">Azara's grass mouse</name>
    <dbReference type="NCBI Taxonomy" id="29095"/>
    <lineage>
        <taxon>Eukaryota</taxon>
        <taxon>Metazoa</taxon>
        <taxon>Chordata</taxon>
        <taxon>Craniata</taxon>
        <taxon>Vertebrata</taxon>
        <taxon>Euteleostomi</taxon>
        <taxon>Mammalia</taxon>
        <taxon>Eutheria</taxon>
        <taxon>Euarchontoglires</taxon>
        <taxon>Glires</taxon>
        <taxon>Rodentia</taxon>
        <taxon>Myomorpha</taxon>
        <taxon>Muroidea</taxon>
        <taxon>Cricetidae</taxon>
        <taxon>Sigmodontinae</taxon>
        <taxon>Akodon</taxon>
    </lineage>
</organism>